<accession>B0M3D4</accession>
<feature type="peptide" id="PRO_0000420780" description="Extended FMRFamide-10" evidence="3">
    <location>
        <begin position="1"/>
        <end position="12"/>
    </location>
</feature>
<organism>
    <name type="scientific">Mantophasma kudubergense</name>
    <name type="common">Gladiator</name>
    <name type="synonym">Heel-walker</name>
    <dbReference type="NCBI Taxonomy" id="1037657"/>
    <lineage>
        <taxon>Eukaryota</taxon>
        <taxon>Metazoa</taxon>
        <taxon>Ecdysozoa</taxon>
        <taxon>Arthropoda</taxon>
        <taxon>Hexapoda</taxon>
        <taxon>Insecta</taxon>
        <taxon>Pterygota</taxon>
        <taxon>Neoptera</taxon>
        <taxon>Polyneoptera</taxon>
        <taxon>Mantophasmatodea</taxon>
        <taxon>Mantophasmatidae</taxon>
        <taxon>Mantophasma</taxon>
    </lineage>
</organism>
<comment type="function">
    <text evidence="1">FMRFamides and FMRFamide-like peptides are neuropeptides.</text>
</comment>
<comment type="subcellular location">
    <subcellularLocation>
        <location evidence="6">Secreted</location>
    </subcellularLocation>
</comment>
<comment type="similarity">
    <text evidence="2">Belongs to the FARP (FMRF amide related peptide) family.</text>
</comment>
<proteinExistence type="evidence at protein level"/>
<dbReference type="GO" id="GO:0005576">
    <property type="term" value="C:extracellular region"/>
    <property type="evidence" value="ECO:0007669"/>
    <property type="project" value="UniProtKB-SubCell"/>
</dbReference>
<dbReference type="GO" id="GO:0007218">
    <property type="term" value="P:neuropeptide signaling pathway"/>
    <property type="evidence" value="ECO:0007669"/>
    <property type="project" value="UniProtKB-KW"/>
</dbReference>
<name>FAR10_MANKU</name>
<evidence type="ECO:0000250" key="1">
    <source>
        <dbReference type="UniProtKB" id="P34405"/>
    </source>
</evidence>
<evidence type="ECO:0000255" key="2"/>
<evidence type="ECO:0000269" key="3">
    <source>
    </source>
</evidence>
<evidence type="ECO:0000303" key="4">
    <source>
    </source>
</evidence>
<evidence type="ECO:0000305" key="5"/>
<evidence type="ECO:0000305" key="6">
    <source>
    </source>
</evidence>
<keyword id="KW-0903">Direct protein sequencing</keyword>
<keyword id="KW-0527">Neuropeptide</keyword>
<keyword id="KW-0964">Secreted</keyword>
<protein>
    <recommendedName>
        <fullName evidence="4">Extended FMRFamide-10</fullName>
        <shortName evidence="4">FMRFa-10</shortName>
    </recommendedName>
</protein>
<reference evidence="5" key="1">
    <citation type="journal article" date="2012" name="Syst. Biol.">
        <title>Peptidomics-based phylogeny and biogeography of Mantophasmatodea (Hexapoda).</title>
        <authorList>
            <person name="Predel R."/>
            <person name="Neupert S."/>
            <person name="Huetteroth W."/>
            <person name="Kahnt J."/>
            <person name="Waidelich D."/>
            <person name="Roth S."/>
        </authorList>
    </citation>
    <scope>PROTEIN SEQUENCE</scope>
    <source>
        <tissue evidence="3">Thoracic perisympathetic organs</tissue>
    </source>
</reference>
<sequence length="12" mass="1289">PAASESGFRRDP</sequence>